<organism>
    <name type="scientific">Mycolicibacterium gilvum (strain PYR-GCK)</name>
    <name type="common">Mycobacterium gilvum (strain PYR-GCK)</name>
    <dbReference type="NCBI Taxonomy" id="350054"/>
    <lineage>
        <taxon>Bacteria</taxon>
        <taxon>Bacillati</taxon>
        <taxon>Actinomycetota</taxon>
        <taxon>Actinomycetes</taxon>
        <taxon>Mycobacteriales</taxon>
        <taxon>Mycobacteriaceae</taxon>
        <taxon>Mycolicibacterium</taxon>
    </lineage>
</organism>
<evidence type="ECO:0000255" key="1">
    <source>
        <dbReference type="HAMAP-Rule" id="MF_00203"/>
    </source>
</evidence>
<evidence type="ECO:0000256" key="2">
    <source>
        <dbReference type="SAM" id="MobiDB-lite"/>
    </source>
</evidence>
<gene>
    <name evidence="1" type="primary">uvrC</name>
    <name type="ordered locus">Mflv_3715</name>
</gene>
<accession>A4TC09</accession>
<sequence>MPDPATYRPAPGSIPVEPGVYRFRDPHGRVIYVGKAKSLRSRLNSYFADISGLAPRTRQMVMTASSVEWTVVGTEVEALQLEYNWIKEFDPRFNIRYRDDKSYPVLAVTLNEEYPRLKVYRGPRRKGVRYFGPYSHAWAIRETVDLLTRVFPARTCSNGVFKRHSQIDRPCLLGYIDKCSAPCVGRVSAEQHRQIVQDFCDFLAGKTDRLIREMEQQMTAAAEDLDFERAARLRDNIGAMRRAMEKQTVVLGDGTDADVVAFADDELEAAVQVFHVRGGRVRGQRGWVIEKSGEPGESTLEYLVEQFLTQFYGDQAELGGASDAGGDEASNPVPKQVLVPVLPETTDELETWLSQLRGSRVALRVPQRGDKRALAETVKRNAEGALNQHKLKRAGDFTARSAALQSIQENLGLQDAPLRIECIDISHVQGTDVVASLVVFEDGLPRKSDYRHFAIREAAGDGRSDDVASIAEVTRRRFHRHLRDMQEPGEMVAEGRSRRFAYPPNLFVVDGGAPQVNAAQAVLDDLGISDVAVIGLAKRLEEVWVPNLDGTAPDPIIFPRNSDGLYLLQRVRDEAHRFAISYHRSKRSKRMTASALDSVRGLGEHRRKALVTHFGSLARLKQATVEEITEVPGIGAATARAVLDALGIEAPPEPGAEAPPDSGAAAAVMGNDQSRVPG</sequence>
<dbReference type="EMBL" id="CP000656">
    <property type="protein sequence ID" value="ABP46187.1"/>
    <property type="molecule type" value="Genomic_DNA"/>
</dbReference>
<dbReference type="SMR" id="A4TC09"/>
<dbReference type="STRING" id="350054.Mflv_3715"/>
<dbReference type="KEGG" id="mgi:Mflv_3715"/>
<dbReference type="eggNOG" id="COG0322">
    <property type="taxonomic scope" value="Bacteria"/>
</dbReference>
<dbReference type="HOGENOM" id="CLU_014841_3_2_11"/>
<dbReference type="OrthoDB" id="9804933at2"/>
<dbReference type="GO" id="GO:0005737">
    <property type="term" value="C:cytoplasm"/>
    <property type="evidence" value="ECO:0007669"/>
    <property type="project" value="UniProtKB-SubCell"/>
</dbReference>
<dbReference type="GO" id="GO:0009380">
    <property type="term" value="C:excinuclease repair complex"/>
    <property type="evidence" value="ECO:0007669"/>
    <property type="project" value="InterPro"/>
</dbReference>
<dbReference type="GO" id="GO:0003677">
    <property type="term" value="F:DNA binding"/>
    <property type="evidence" value="ECO:0007669"/>
    <property type="project" value="UniProtKB-UniRule"/>
</dbReference>
<dbReference type="GO" id="GO:0009381">
    <property type="term" value="F:excinuclease ABC activity"/>
    <property type="evidence" value="ECO:0007669"/>
    <property type="project" value="UniProtKB-UniRule"/>
</dbReference>
<dbReference type="GO" id="GO:0006289">
    <property type="term" value="P:nucleotide-excision repair"/>
    <property type="evidence" value="ECO:0007669"/>
    <property type="project" value="UniProtKB-UniRule"/>
</dbReference>
<dbReference type="GO" id="GO:0009432">
    <property type="term" value="P:SOS response"/>
    <property type="evidence" value="ECO:0007669"/>
    <property type="project" value="UniProtKB-UniRule"/>
</dbReference>
<dbReference type="CDD" id="cd10434">
    <property type="entry name" value="GIY-YIG_UvrC_Cho"/>
    <property type="match status" value="1"/>
</dbReference>
<dbReference type="FunFam" id="3.30.420.340:FF:000003">
    <property type="entry name" value="UvrABC system protein C"/>
    <property type="match status" value="1"/>
</dbReference>
<dbReference type="FunFam" id="3.40.1440.10:FF:000001">
    <property type="entry name" value="UvrABC system protein C"/>
    <property type="match status" value="1"/>
</dbReference>
<dbReference type="Gene3D" id="1.10.150.20">
    <property type="entry name" value="5' to 3' exonuclease, C-terminal subdomain"/>
    <property type="match status" value="1"/>
</dbReference>
<dbReference type="Gene3D" id="3.40.1440.10">
    <property type="entry name" value="GIY-YIG endonuclease"/>
    <property type="match status" value="1"/>
</dbReference>
<dbReference type="Gene3D" id="4.10.860.10">
    <property type="entry name" value="UVR domain"/>
    <property type="match status" value="1"/>
</dbReference>
<dbReference type="Gene3D" id="3.30.420.340">
    <property type="entry name" value="UvrC, RNAse H endonuclease domain"/>
    <property type="match status" value="1"/>
</dbReference>
<dbReference type="HAMAP" id="MF_00203">
    <property type="entry name" value="UvrC"/>
    <property type="match status" value="1"/>
</dbReference>
<dbReference type="InterPro" id="IPR000305">
    <property type="entry name" value="GIY-YIG_endonuc"/>
</dbReference>
<dbReference type="InterPro" id="IPR035901">
    <property type="entry name" value="GIY-YIG_endonuc_sf"/>
</dbReference>
<dbReference type="InterPro" id="IPR047296">
    <property type="entry name" value="GIY-YIG_UvrC_Cho"/>
</dbReference>
<dbReference type="InterPro" id="IPR003583">
    <property type="entry name" value="Hlx-hairpin-Hlx_DNA-bd_motif"/>
</dbReference>
<dbReference type="InterPro" id="IPR010994">
    <property type="entry name" value="RuvA_2-like"/>
</dbReference>
<dbReference type="InterPro" id="IPR001943">
    <property type="entry name" value="UVR_dom"/>
</dbReference>
<dbReference type="InterPro" id="IPR036876">
    <property type="entry name" value="UVR_dom_sf"/>
</dbReference>
<dbReference type="InterPro" id="IPR050066">
    <property type="entry name" value="UvrABC_protein_C"/>
</dbReference>
<dbReference type="InterPro" id="IPR004791">
    <property type="entry name" value="UvrC"/>
</dbReference>
<dbReference type="InterPro" id="IPR001162">
    <property type="entry name" value="UvrC_RNase_H_dom"/>
</dbReference>
<dbReference type="InterPro" id="IPR038476">
    <property type="entry name" value="UvrC_RNase_H_dom_sf"/>
</dbReference>
<dbReference type="NCBIfam" id="NF001824">
    <property type="entry name" value="PRK00558.1-5"/>
    <property type="match status" value="1"/>
</dbReference>
<dbReference type="NCBIfam" id="TIGR00194">
    <property type="entry name" value="uvrC"/>
    <property type="match status" value="1"/>
</dbReference>
<dbReference type="PANTHER" id="PTHR30562:SF1">
    <property type="entry name" value="UVRABC SYSTEM PROTEIN C"/>
    <property type="match status" value="1"/>
</dbReference>
<dbReference type="PANTHER" id="PTHR30562">
    <property type="entry name" value="UVRC/OXIDOREDUCTASE"/>
    <property type="match status" value="1"/>
</dbReference>
<dbReference type="Pfam" id="PF01541">
    <property type="entry name" value="GIY-YIG"/>
    <property type="match status" value="1"/>
</dbReference>
<dbReference type="Pfam" id="PF14520">
    <property type="entry name" value="HHH_5"/>
    <property type="match status" value="1"/>
</dbReference>
<dbReference type="Pfam" id="PF02151">
    <property type="entry name" value="UVR"/>
    <property type="match status" value="1"/>
</dbReference>
<dbReference type="Pfam" id="PF22920">
    <property type="entry name" value="UvrC_RNaseH"/>
    <property type="match status" value="1"/>
</dbReference>
<dbReference type="Pfam" id="PF08459">
    <property type="entry name" value="UvrC_RNaseH_dom"/>
    <property type="match status" value="1"/>
</dbReference>
<dbReference type="SMART" id="SM00465">
    <property type="entry name" value="GIYc"/>
    <property type="match status" value="1"/>
</dbReference>
<dbReference type="SMART" id="SM00278">
    <property type="entry name" value="HhH1"/>
    <property type="match status" value="2"/>
</dbReference>
<dbReference type="SUPFAM" id="SSF46600">
    <property type="entry name" value="C-terminal UvrC-binding domain of UvrB"/>
    <property type="match status" value="1"/>
</dbReference>
<dbReference type="SUPFAM" id="SSF82771">
    <property type="entry name" value="GIY-YIG endonuclease"/>
    <property type="match status" value="1"/>
</dbReference>
<dbReference type="SUPFAM" id="SSF47781">
    <property type="entry name" value="RuvA domain 2-like"/>
    <property type="match status" value="1"/>
</dbReference>
<dbReference type="PROSITE" id="PS50164">
    <property type="entry name" value="GIY_YIG"/>
    <property type="match status" value="1"/>
</dbReference>
<dbReference type="PROSITE" id="PS50151">
    <property type="entry name" value="UVR"/>
    <property type="match status" value="1"/>
</dbReference>
<dbReference type="PROSITE" id="PS50165">
    <property type="entry name" value="UVRC"/>
    <property type="match status" value="1"/>
</dbReference>
<keyword id="KW-0963">Cytoplasm</keyword>
<keyword id="KW-0227">DNA damage</keyword>
<keyword id="KW-0228">DNA excision</keyword>
<keyword id="KW-0234">DNA repair</keyword>
<keyword id="KW-0267">Excision nuclease</keyword>
<keyword id="KW-0742">SOS response</keyword>
<proteinExistence type="inferred from homology"/>
<reference key="1">
    <citation type="submission" date="2007-04" db="EMBL/GenBank/DDBJ databases">
        <title>Complete sequence of chromosome of Mycobacterium gilvum PYR-GCK.</title>
        <authorList>
            <consortium name="US DOE Joint Genome Institute"/>
            <person name="Copeland A."/>
            <person name="Lucas S."/>
            <person name="Lapidus A."/>
            <person name="Barry K."/>
            <person name="Detter J.C."/>
            <person name="Glavina del Rio T."/>
            <person name="Hammon N."/>
            <person name="Israni S."/>
            <person name="Dalin E."/>
            <person name="Tice H."/>
            <person name="Pitluck S."/>
            <person name="Chain P."/>
            <person name="Malfatti S."/>
            <person name="Shin M."/>
            <person name="Vergez L."/>
            <person name="Schmutz J."/>
            <person name="Larimer F."/>
            <person name="Land M."/>
            <person name="Hauser L."/>
            <person name="Kyrpides N."/>
            <person name="Mikhailova N."/>
            <person name="Miller C."/>
            <person name="Richardson P."/>
        </authorList>
    </citation>
    <scope>NUCLEOTIDE SEQUENCE [LARGE SCALE GENOMIC DNA]</scope>
    <source>
        <strain>PYR-GCK</strain>
    </source>
</reference>
<name>UVRC_MYCGI</name>
<feature type="chain" id="PRO_1000077808" description="UvrABC system protein C">
    <location>
        <begin position="1"/>
        <end position="678"/>
    </location>
</feature>
<feature type="domain" description="GIY-YIG" evidence="1">
    <location>
        <begin position="16"/>
        <end position="95"/>
    </location>
</feature>
<feature type="domain" description="UVR" evidence="1">
    <location>
        <begin position="208"/>
        <end position="243"/>
    </location>
</feature>
<feature type="region of interest" description="Disordered" evidence="2">
    <location>
        <begin position="649"/>
        <end position="678"/>
    </location>
</feature>
<feature type="compositionally biased region" description="Low complexity" evidence="2">
    <location>
        <begin position="649"/>
        <end position="667"/>
    </location>
</feature>
<comment type="function">
    <text evidence="1">The UvrABC repair system catalyzes the recognition and processing of DNA lesions. UvrC both incises the 5' and 3' sides of the lesion. The N-terminal half is responsible for the 3' incision and the C-terminal half is responsible for the 5' incision.</text>
</comment>
<comment type="subunit">
    <text evidence="1">Interacts with UvrB in an incision complex.</text>
</comment>
<comment type="subcellular location">
    <subcellularLocation>
        <location evidence="1">Cytoplasm</location>
    </subcellularLocation>
</comment>
<comment type="similarity">
    <text evidence="1">Belongs to the UvrC family.</text>
</comment>
<protein>
    <recommendedName>
        <fullName evidence="1">UvrABC system protein C</fullName>
        <shortName evidence="1">Protein UvrC</shortName>
    </recommendedName>
    <alternativeName>
        <fullName evidence="1">Excinuclease ABC subunit C</fullName>
    </alternativeName>
</protein>